<name>DLTC_STRP8</name>
<protein>
    <recommendedName>
        <fullName evidence="1">D-alanyl carrier protein</fullName>
        <shortName evidence="1">DCP</shortName>
    </recommendedName>
    <alternativeName>
        <fullName evidence="1">D-alanine--poly(phosphoribitol) ligase subunit 2</fullName>
    </alternativeName>
</protein>
<accession>P63961</accession>
<accession>Q99ZA8</accession>
<feature type="chain" id="PRO_0000213117" description="D-alanyl carrier protein">
    <location>
        <begin position="1"/>
        <end position="79"/>
    </location>
</feature>
<feature type="domain" description="Carrier" evidence="1">
    <location>
        <begin position="1"/>
        <end position="77"/>
    </location>
</feature>
<feature type="modified residue" description="O-(pantetheine 4'-phosphoryl)serine" evidence="1">
    <location>
        <position position="35"/>
    </location>
</feature>
<reference key="1">
    <citation type="journal article" date="2002" name="Proc. Natl. Acad. Sci. U.S.A.">
        <title>Genome sequence and comparative microarray analysis of serotype M18 group A Streptococcus strains associated with acute rheumatic fever outbreaks.</title>
        <authorList>
            <person name="Smoot J.C."/>
            <person name="Barbian K.D."/>
            <person name="Van Gompel J.J."/>
            <person name="Smoot L.M."/>
            <person name="Chaussee M.S."/>
            <person name="Sylva G.L."/>
            <person name="Sturdevant D.E."/>
            <person name="Ricklefs S.M."/>
            <person name="Porcella S.F."/>
            <person name="Parkins L.D."/>
            <person name="Beres S.B."/>
            <person name="Campbell D.S."/>
            <person name="Smith T.M."/>
            <person name="Zhang Q."/>
            <person name="Kapur V."/>
            <person name="Daly J.A."/>
            <person name="Veasy L.G."/>
            <person name="Musser J.M."/>
        </authorList>
    </citation>
    <scope>NUCLEOTIDE SEQUENCE [LARGE SCALE GENOMIC DNA]</scope>
    <source>
        <strain>MGAS8232</strain>
    </source>
</reference>
<keyword id="KW-0961">Cell wall biogenesis/degradation</keyword>
<keyword id="KW-0963">Cytoplasm</keyword>
<keyword id="KW-0596">Phosphopantetheine</keyword>
<keyword id="KW-0597">Phosphoprotein</keyword>
<gene>
    <name evidence="1" type="primary">dltC</name>
    <name type="ordered locus">spyM18_1322</name>
</gene>
<dbReference type="EMBL" id="AE009949">
    <property type="protein sequence ID" value="AAL97926.1"/>
    <property type="molecule type" value="Genomic_DNA"/>
</dbReference>
<dbReference type="RefSeq" id="WP_002984216.1">
    <property type="nucleotide sequence ID" value="NC_003485.1"/>
</dbReference>
<dbReference type="SMR" id="P63961"/>
<dbReference type="GeneID" id="83690920"/>
<dbReference type="KEGG" id="spm:spyM18_1322"/>
<dbReference type="HOGENOM" id="CLU_108696_19_0_9"/>
<dbReference type="UniPathway" id="UPA00556"/>
<dbReference type="GO" id="GO:0005737">
    <property type="term" value="C:cytoplasm"/>
    <property type="evidence" value="ECO:0007669"/>
    <property type="project" value="UniProtKB-SubCell"/>
</dbReference>
<dbReference type="GO" id="GO:0036370">
    <property type="term" value="F:D-alanyl carrier activity"/>
    <property type="evidence" value="ECO:0007669"/>
    <property type="project" value="UniProtKB-UniRule"/>
</dbReference>
<dbReference type="GO" id="GO:0071555">
    <property type="term" value="P:cell wall organization"/>
    <property type="evidence" value="ECO:0007669"/>
    <property type="project" value="UniProtKB-KW"/>
</dbReference>
<dbReference type="GO" id="GO:0070395">
    <property type="term" value="P:lipoteichoic acid biosynthetic process"/>
    <property type="evidence" value="ECO:0007669"/>
    <property type="project" value="UniProtKB-UniRule"/>
</dbReference>
<dbReference type="Gene3D" id="1.10.1200.10">
    <property type="entry name" value="ACP-like"/>
    <property type="match status" value="1"/>
</dbReference>
<dbReference type="HAMAP" id="MF_00565">
    <property type="entry name" value="DltC"/>
    <property type="match status" value="1"/>
</dbReference>
<dbReference type="InterPro" id="IPR036736">
    <property type="entry name" value="ACP-like_sf"/>
</dbReference>
<dbReference type="InterPro" id="IPR003230">
    <property type="entry name" value="DltC"/>
</dbReference>
<dbReference type="InterPro" id="IPR009081">
    <property type="entry name" value="PP-bd_ACP"/>
</dbReference>
<dbReference type="NCBIfam" id="TIGR01688">
    <property type="entry name" value="dltC"/>
    <property type="match status" value="1"/>
</dbReference>
<dbReference type="NCBIfam" id="NF003464">
    <property type="entry name" value="PRK05087.1"/>
    <property type="match status" value="1"/>
</dbReference>
<dbReference type="Pfam" id="PF00550">
    <property type="entry name" value="PP-binding"/>
    <property type="match status" value="1"/>
</dbReference>
<dbReference type="SUPFAM" id="SSF47336">
    <property type="entry name" value="ACP-like"/>
    <property type="match status" value="1"/>
</dbReference>
<dbReference type="PROSITE" id="PS50075">
    <property type="entry name" value="CARRIER"/>
    <property type="match status" value="1"/>
</dbReference>
<comment type="function">
    <text evidence="1">Carrier protein involved in the D-alanylation of lipoteichoic acid (LTA). The loading of thioester-linked D-alanine onto DltC is catalyzed by D-alanine--D-alanyl carrier protein ligase DltA. The DltC-carried D-alanyl group is further transferred to cell membrane phosphatidylglycerol (PG) by forming an ester bond, probably catalyzed by DltD. D-alanylation of LTA plays an important role in modulating the properties of the cell wall in Gram-positive bacteria, influencing the net charge of the cell wall.</text>
</comment>
<comment type="pathway">
    <text evidence="1">Cell wall biogenesis; lipoteichoic acid biosynthesis.</text>
</comment>
<comment type="subcellular location">
    <subcellularLocation>
        <location evidence="1">Cytoplasm</location>
    </subcellularLocation>
</comment>
<comment type="PTM">
    <text evidence="1">4'-phosphopantetheine is transferred from CoA to a specific serine of apo-DCP.</text>
</comment>
<comment type="similarity">
    <text evidence="1">Belongs to the DltC family.</text>
</comment>
<proteinExistence type="inferred from homology"/>
<organism>
    <name type="scientific">Streptococcus pyogenes serotype M18 (strain MGAS8232)</name>
    <dbReference type="NCBI Taxonomy" id="186103"/>
    <lineage>
        <taxon>Bacteria</taxon>
        <taxon>Bacillati</taxon>
        <taxon>Bacillota</taxon>
        <taxon>Bacilli</taxon>
        <taxon>Lactobacillales</taxon>
        <taxon>Streptococcaceae</taxon>
        <taxon>Streptococcus</taxon>
    </lineage>
</organism>
<sequence>MSIEETVIELFDRLFMEDVSEMMDEDLFDAGVLDSLGTVELIVELESTFNIKVPISEFGRDDWNTVTKIVQGVEELQHA</sequence>
<evidence type="ECO:0000255" key="1">
    <source>
        <dbReference type="HAMAP-Rule" id="MF_00565"/>
    </source>
</evidence>